<evidence type="ECO:0000250" key="1">
    <source>
        <dbReference type="UniProtKB" id="Q96T66"/>
    </source>
</evidence>
<evidence type="ECO:0000250" key="2">
    <source>
        <dbReference type="UniProtKB" id="Q9BZQ4"/>
    </source>
</evidence>
<evidence type="ECO:0000269" key="3">
    <source>
    </source>
</evidence>
<evidence type="ECO:0000269" key="4">
    <source>
    </source>
</evidence>
<evidence type="ECO:0000269" key="5">
    <source>
    </source>
</evidence>
<evidence type="ECO:0000269" key="6">
    <source>
    </source>
</evidence>
<evidence type="ECO:0000269" key="7">
    <source>
    </source>
</evidence>
<evidence type="ECO:0000269" key="8">
    <source>
    </source>
</evidence>
<evidence type="ECO:0000303" key="9">
    <source>
    </source>
</evidence>
<evidence type="ECO:0000303" key="10">
    <source>
    </source>
</evidence>
<evidence type="ECO:0000305" key="11"/>
<evidence type="ECO:0000312" key="12">
    <source>
        <dbReference type="MGI" id="MGI:2444155"/>
    </source>
</evidence>
<comment type="function">
    <text evidence="2 3 4 5 8">Nicotinamide/nicotinate-nucleotide adenylyltransferase that acts as an axon maintenance factor (PubMed:20126265, PubMed:23082226). Axon survival factor required for the maintenance of healthy axons: acts by delaying Wallerian axon degeneration, an evolutionarily conserved process that drives the loss of damaged axons (PubMed:20126265, PubMed:23082226, PubMed:25818290). Catalyzes the formation of NAD(+) from nicotinamide mononucleotide (NMN) and ATP (By similarity). Can also use the deamidated form; nicotinic acid mononucleotide (NaMN) as substrate but with a lower efficiency. Cannot use triazofurin monophosphate (TrMP) as substrate (By similarity). Also catalyzes the reverse reaction, i.e. the pyrophosphorolytic cleavage of NAD(+). For the pyrophosphorolytic activity prefers NAD(+), NADH and NaAD as substrates and degrades nicotinic acid adenine dinucleotide phosphate (NHD) less effectively (By similarity). Fails to cleave phosphorylated dinucleotides NADP(+), NADPH and NaADP(+) (By similarity). Also acts as an activator of ADP-ribosylation by supporting the catalytic activity of PARP16 and promoting mono-ADP-ribosylation of ribosomes by PARP16 (By similarity). May be involved in the maintenance of axonal integrity (PubMed:22425156).</text>
</comment>
<comment type="catalytic activity">
    <reaction evidence="2">
        <text>beta-nicotinamide D-ribonucleotide + ATP + H(+) = diphosphate + NAD(+)</text>
        <dbReference type="Rhea" id="RHEA:21360"/>
        <dbReference type="ChEBI" id="CHEBI:14649"/>
        <dbReference type="ChEBI" id="CHEBI:15378"/>
        <dbReference type="ChEBI" id="CHEBI:30616"/>
        <dbReference type="ChEBI" id="CHEBI:33019"/>
        <dbReference type="ChEBI" id="CHEBI:57540"/>
        <dbReference type="EC" id="2.7.7.1"/>
    </reaction>
    <physiologicalReaction direction="left-to-right" evidence="2">
        <dbReference type="Rhea" id="RHEA:21361"/>
    </physiologicalReaction>
    <physiologicalReaction direction="right-to-left" evidence="2">
        <dbReference type="Rhea" id="RHEA:21362"/>
    </physiologicalReaction>
</comment>
<comment type="catalytic activity">
    <reaction evidence="2">
        <text>nicotinate beta-D-ribonucleotide + ATP + H(+) = deamido-NAD(+) + diphosphate</text>
        <dbReference type="Rhea" id="RHEA:22860"/>
        <dbReference type="ChEBI" id="CHEBI:15378"/>
        <dbReference type="ChEBI" id="CHEBI:30616"/>
        <dbReference type="ChEBI" id="CHEBI:33019"/>
        <dbReference type="ChEBI" id="CHEBI:57502"/>
        <dbReference type="ChEBI" id="CHEBI:58437"/>
        <dbReference type="EC" id="2.7.7.18"/>
    </reaction>
    <physiologicalReaction direction="left-to-right" evidence="2">
        <dbReference type="Rhea" id="RHEA:22861"/>
    </physiologicalReaction>
    <physiologicalReaction direction="right-to-left" evidence="2">
        <dbReference type="Rhea" id="RHEA:22862"/>
    </physiologicalReaction>
</comment>
<comment type="cofactor">
    <cofactor evidence="2">
        <name>Mg(2+)</name>
        <dbReference type="ChEBI" id="CHEBI:18420"/>
    </cofactor>
    <text evidence="2">Divalent metal cations. Mg(2+) confers the highest activity.</text>
</comment>
<comment type="activity regulation">
    <text evidence="2">Inhibited by P1-(adenosine-5')-P3-(nicotinamide-riboside-5')-triphosphate (Np3AD) and P1-(adenosine-5')-P4-(nicotinamide-riboside-5')-tetraphosphate (Np4AD).</text>
</comment>
<comment type="pathway">
    <text evidence="2">Cofactor biosynthesis; NAD(+) biosynthesis; NAD(+) from nicotinamide D-ribonucleotide: step 1/1.</text>
</comment>
<comment type="pathway">
    <text evidence="2">Cofactor biosynthesis; NAD(+) biosynthesis; deamido-NAD(+) from nicotinate D-ribonucleotide: step 1/1.</text>
</comment>
<comment type="subunit">
    <text evidence="2">Monomer.</text>
</comment>
<comment type="subcellular location">
    <subcellularLocation>
        <location evidence="6">Golgi apparatus membrane</location>
        <topology evidence="6">Lipid-anchor</topology>
    </subcellularLocation>
    <subcellularLocation>
        <location>Cytoplasmic vesicle membrane</location>
        <topology evidence="6">Lipid-anchor</topology>
    </subcellularLocation>
    <subcellularLocation>
        <location evidence="2">Cytoplasm</location>
    </subcellularLocation>
    <subcellularLocation>
        <location evidence="6">Cell projection</location>
        <location evidence="6">Axon</location>
    </subcellularLocation>
    <text evidence="6">Delivered to axons with Golgi-derived cytoplasmic vesicles.</text>
</comment>
<comment type="tissue specificity">
    <text evidence="5">Expressed predominantly in the brain and nervous system.</text>
</comment>
<comment type="PTM">
    <text evidence="3 6 7">Degraded in response to injured neurite (PubMed:20126265, PubMed:23610559, PubMed:23665224). Degradation is caused by polyubiquitination by MYCBP2 after recognition by FBXO45 (PubMed:23610559, PubMed:23665224).</text>
</comment>
<comment type="PTM">
    <text evidence="6">Palmitoylated; palmitoylation is required for membrane association.</text>
</comment>
<comment type="disruption phenotype">
    <text evidence="5 8">Perinatal lethality (PubMed:23082226). Mice show a greatly distended bladder, underdeveloped diaphragm and a reduction in total skeletal muscle mass (PubMed:23082226). Defects are caused by defects in innervation of major organs and tissues (PubMed:23082226). Mice lacking both Sarm1 and Nmnat2 are viable and survive: Sarm1 deficiency corrects axon outgrowth in mice lacking Nmnat2, independently of NMNAT metabolites, preventing perinatal lethality (PubMed:25818290).</text>
</comment>
<comment type="similarity">
    <text evidence="11">Belongs to the eukaryotic NMN adenylyltransferase family.</text>
</comment>
<comment type="sequence caution" evidence="11">
    <conflict type="frameshift">
        <sequence resource="EMBL-CDS" id="BAC97965"/>
    </conflict>
</comment>
<accession>Q8BNJ3</accession>
<name>NMNA2_MOUSE</name>
<organism>
    <name type="scientific">Mus musculus</name>
    <name type="common">Mouse</name>
    <dbReference type="NCBI Taxonomy" id="10090"/>
    <lineage>
        <taxon>Eukaryota</taxon>
        <taxon>Metazoa</taxon>
        <taxon>Chordata</taxon>
        <taxon>Craniata</taxon>
        <taxon>Vertebrata</taxon>
        <taxon>Euteleostomi</taxon>
        <taxon>Mammalia</taxon>
        <taxon>Eutheria</taxon>
        <taxon>Euarchontoglires</taxon>
        <taxon>Glires</taxon>
        <taxon>Rodentia</taxon>
        <taxon>Myomorpha</taxon>
        <taxon>Muroidea</taxon>
        <taxon>Muridae</taxon>
        <taxon>Murinae</taxon>
        <taxon>Mus</taxon>
        <taxon>Mus</taxon>
    </lineage>
</organism>
<sequence length="307" mass="34505">MTETTKTHVILLACGSFNPITKGHIQMFERARDYLHKTGRFIVIGGIVSPVHDSYGKQGLVSSRHRLIMCQLAVQNSDWIRVDPWECYQDTWQTTCSVLEHHRDLMKRVTGCILSNVNTPSMTPVIGQPQHENTQPIYQNSNVPTKPTAAKILGKVGESLSRICCVRPPVERFTFVDENANLGTVMRYEEIELRILLLCGSDLLESFCIPGLWNEADMEVIVGDFGIVVVPRDAADTDRIMNHSSILRKYKNNIMVVKDDINHPMSVVSSTKSRLALQHGDGHVVDYLSQPVIDYILKSQLYINASG</sequence>
<proteinExistence type="evidence at protein level"/>
<feature type="chain" id="PRO_0000135015" description="Nicotinamide/nicotinic acid mononucleotide adenylyltransferase 2">
    <location>
        <begin position="1"/>
        <end position="307"/>
    </location>
</feature>
<feature type="binding site" evidence="1">
    <location>
        <position position="16"/>
    </location>
    <ligand>
        <name>NAD(+)</name>
        <dbReference type="ChEBI" id="CHEBI:57540"/>
    </ligand>
</feature>
<feature type="binding site" evidence="1">
    <location>
        <position position="17"/>
    </location>
    <ligand>
        <name>NAD(+)</name>
        <dbReference type="ChEBI" id="CHEBI:57540"/>
    </ligand>
</feature>
<feature type="binding site" description="in other chain" evidence="1">
    <location>
        <position position="24"/>
    </location>
    <ligand>
        <name>ATP</name>
        <dbReference type="ChEBI" id="CHEBI:30616"/>
        <note>ligand shared between dimeric partners</note>
    </ligand>
</feature>
<feature type="binding site" evidence="1">
    <location>
        <position position="92"/>
    </location>
    <ligand>
        <name>NAD(+)</name>
        <dbReference type="ChEBI" id="CHEBI:57540"/>
    </ligand>
</feature>
<feature type="binding site" evidence="1">
    <location>
        <position position="95"/>
    </location>
    <ligand>
        <name>NAD(+)</name>
        <dbReference type="ChEBI" id="CHEBI:57540"/>
    </ligand>
</feature>
<feature type="binding site" evidence="1">
    <location>
        <position position="200"/>
    </location>
    <ligand>
        <name>NAD(+)</name>
        <dbReference type="ChEBI" id="CHEBI:57540"/>
    </ligand>
</feature>
<feature type="binding site" evidence="1">
    <location>
        <position position="202"/>
    </location>
    <ligand>
        <name>NAD(+)</name>
        <dbReference type="ChEBI" id="CHEBI:57540"/>
    </ligand>
</feature>
<feature type="binding site" evidence="1">
    <location>
        <position position="212"/>
    </location>
    <ligand>
        <name>NAD(+)</name>
        <dbReference type="ChEBI" id="CHEBI:57540"/>
    </ligand>
</feature>
<feature type="binding site" evidence="1">
    <location>
        <position position="213"/>
    </location>
    <ligand>
        <name>NAD(+)</name>
        <dbReference type="ChEBI" id="CHEBI:57540"/>
    </ligand>
</feature>
<feature type="binding site" evidence="1">
    <location>
        <position position="232"/>
    </location>
    <ligand>
        <name>NAD(+)</name>
        <dbReference type="ChEBI" id="CHEBI:57540"/>
    </ligand>
</feature>
<feature type="binding site" description="in other chain" evidence="1">
    <location>
        <begin position="271"/>
        <end position="274"/>
    </location>
    <ligand>
        <name>ATP</name>
        <dbReference type="ChEBI" id="CHEBI:30616"/>
        <note>ligand shared between dimeric partners</note>
    </ligand>
</feature>
<feature type="lipid moiety-binding region" description="S-palmitoyl cysteine" evidence="6">
    <location>
        <position position="164"/>
    </location>
</feature>
<feature type="lipid moiety-binding region" description="S-palmitoyl cysteine" evidence="6">
    <location>
        <position position="165"/>
    </location>
</feature>
<feature type="mutagenesis site" description="Impaired membrane association in neurons; when associated with A-155; A-162; A-167 and A-172.">
    <original>K</original>
    <variation>A</variation>
    <location>
        <position position="151"/>
    </location>
</feature>
<feature type="mutagenesis site" description="Impaired membrane association in neurons; when associated with A-151; A-162; A-167 and A-172.">
    <original>K</original>
    <variation>A</variation>
    <location>
        <position position="155"/>
    </location>
</feature>
<feature type="mutagenesis site" description="Impaired membrane association in neurons; when associated with A-151; A-155; A-167 and A-172.">
    <original>R</original>
    <variation>A</variation>
    <location>
        <position position="162"/>
    </location>
</feature>
<feature type="mutagenesis site" description="Abolished palmitoylation and membrane association in neurons." evidence="6">
    <original>CC</original>
    <variation>SS</variation>
    <location>
        <begin position="164"/>
        <end position="165"/>
    </location>
</feature>
<feature type="mutagenesis site" description="Impaired membrane association in neurons; when associated with A-151; A-155; A-162 and A-172.">
    <original>R</original>
    <variation>A</variation>
    <location>
        <position position="167"/>
    </location>
</feature>
<feature type="mutagenesis site" description="Impaired membrane association in neurons; when associated with A-151; A-155; A-162 and A-167.">
    <original>R</original>
    <variation>A</variation>
    <location>
        <position position="172"/>
    </location>
</feature>
<protein>
    <recommendedName>
        <fullName evidence="11">Nicotinamide/nicotinic acid mononucleotide adenylyltransferase 2</fullName>
        <shortName>NMN/NaMN adenylyltransferase 2</shortName>
        <ecNumber evidence="2">2.7.7.1</ecNumber>
        <ecNumber evidence="2">2.7.7.18</ecNumber>
    </recommendedName>
    <alternativeName>
        <fullName>Nicotinamide mononucleotide adenylyltransferase 2</fullName>
        <shortName>NMN adenylyltransferase 2</shortName>
    </alternativeName>
    <alternativeName>
        <fullName>Nicotinate-nucleotide adenylyltransferase 2</fullName>
        <shortName>NaMN adenylyltransferase 2</shortName>
    </alternativeName>
    <alternativeName>
        <fullName evidence="10">Protein bloated bladder</fullName>
        <shortName evidence="10">Blad</shortName>
    </alternativeName>
</protein>
<keyword id="KW-0067">ATP-binding</keyword>
<keyword id="KW-0966">Cell projection</keyword>
<keyword id="KW-0963">Cytoplasm</keyword>
<keyword id="KW-0968">Cytoplasmic vesicle</keyword>
<keyword id="KW-0333">Golgi apparatus</keyword>
<keyword id="KW-0449">Lipoprotein</keyword>
<keyword id="KW-0472">Membrane</keyword>
<keyword id="KW-0520">NAD</keyword>
<keyword id="KW-0547">Nucleotide-binding</keyword>
<keyword id="KW-0548">Nucleotidyltransferase</keyword>
<keyword id="KW-0564">Palmitate</keyword>
<keyword id="KW-0662">Pyridine nucleotide biosynthesis</keyword>
<keyword id="KW-1185">Reference proteome</keyword>
<keyword id="KW-0808">Transferase</keyword>
<keyword id="KW-0832">Ubl conjugation</keyword>
<dbReference type="EC" id="2.7.7.1" evidence="2"/>
<dbReference type="EC" id="2.7.7.18" evidence="2"/>
<dbReference type="EMBL" id="AK129155">
    <property type="protein sequence ID" value="BAC97965.1"/>
    <property type="status" value="ALT_FRAME"/>
    <property type="molecule type" value="mRNA"/>
</dbReference>
<dbReference type="EMBL" id="AK083532">
    <property type="protein sequence ID" value="BAC38943.1"/>
    <property type="molecule type" value="mRNA"/>
</dbReference>
<dbReference type="CCDS" id="CCDS15368.1"/>
<dbReference type="RefSeq" id="NP_780669.1">
    <property type="nucleotide sequence ID" value="NM_175460.4"/>
</dbReference>
<dbReference type="SMR" id="Q8BNJ3"/>
<dbReference type="FunCoup" id="Q8BNJ3">
    <property type="interactions" value="385"/>
</dbReference>
<dbReference type="STRING" id="10090.ENSMUSP00000041110"/>
<dbReference type="GlyGen" id="Q8BNJ3">
    <property type="glycosylation" value="2 sites, 1 N-linked glycan (2 sites)"/>
</dbReference>
<dbReference type="iPTMnet" id="Q8BNJ3"/>
<dbReference type="PhosphoSitePlus" id="Q8BNJ3"/>
<dbReference type="SwissPalm" id="Q8BNJ3"/>
<dbReference type="PaxDb" id="10090-ENSMUSP00000041110"/>
<dbReference type="ProteomicsDB" id="293694"/>
<dbReference type="Pumba" id="Q8BNJ3"/>
<dbReference type="Antibodypedia" id="2924">
    <property type="antibodies" value="158 antibodies from 22 providers"/>
</dbReference>
<dbReference type="DNASU" id="226518"/>
<dbReference type="Ensembl" id="ENSMUST00000043313.15">
    <property type="protein sequence ID" value="ENSMUSP00000041110.9"/>
    <property type="gene ID" value="ENSMUSG00000042751.15"/>
</dbReference>
<dbReference type="GeneID" id="226518"/>
<dbReference type="KEGG" id="mmu:226518"/>
<dbReference type="UCSC" id="uc007czq.1">
    <property type="organism name" value="mouse"/>
</dbReference>
<dbReference type="AGR" id="MGI:2444155"/>
<dbReference type="CTD" id="23057"/>
<dbReference type="MGI" id="MGI:2444155">
    <property type="gene designation" value="Nmnat2"/>
</dbReference>
<dbReference type="VEuPathDB" id="HostDB:ENSMUSG00000042751"/>
<dbReference type="eggNOG" id="KOG3199">
    <property type="taxonomic scope" value="Eukaryota"/>
</dbReference>
<dbReference type="GeneTree" id="ENSGT00950000183179"/>
<dbReference type="HOGENOM" id="CLU_033366_1_0_1"/>
<dbReference type="InParanoid" id="Q8BNJ3"/>
<dbReference type="OMA" id="QPWKENI"/>
<dbReference type="OrthoDB" id="422187at2759"/>
<dbReference type="PhylomeDB" id="Q8BNJ3"/>
<dbReference type="TreeFam" id="TF315035"/>
<dbReference type="BRENDA" id="2.7.7.1">
    <property type="organism ID" value="3474"/>
</dbReference>
<dbReference type="BRENDA" id="2.7.7.18">
    <property type="organism ID" value="3474"/>
</dbReference>
<dbReference type="Reactome" id="R-MMU-196807">
    <property type="pathway name" value="Nicotinate metabolism"/>
</dbReference>
<dbReference type="UniPathway" id="UPA00253">
    <property type="reaction ID" value="UER00332"/>
</dbReference>
<dbReference type="UniPathway" id="UPA00253">
    <property type="reaction ID" value="UER00600"/>
</dbReference>
<dbReference type="BioGRID-ORCS" id="226518">
    <property type="hits" value="0 hits in 77 CRISPR screens"/>
</dbReference>
<dbReference type="ChiTaRS" id="Nmnat2">
    <property type="organism name" value="mouse"/>
</dbReference>
<dbReference type="PRO" id="PR:Q8BNJ3"/>
<dbReference type="Proteomes" id="UP000000589">
    <property type="component" value="Chromosome 1"/>
</dbReference>
<dbReference type="RNAct" id="Q8BNJ3">
    <property type="molecule type" value="protein"/>
</dbReference>
<dbReference type="Bgee" id="ENSMUSG00000042751">
    <property type="expression patterns" value="Expressed in medial dorsal nucleus of thalamus and 166 other cell types or tissues"/>
</dbReference>
<dbReference type="ExpressionAtlas" id="Q8BNJ3">
    <property type="expression patterns" value="baseline and differential"/>
</dbReference>
<dbReference type="GO" id="GO:0030424">
    <property type="term" value="C:axon"/>
    <property type="evidence" value="ECO:0007669"/>
    <property type="project" value="UniProtKB-SubCell"/>
</dbReference>
<dbReference type="GO" id="GO:0030659">
    <property type="term" value="C:cytoplasmic vesicle membrane"/>
    <property type="evidence" value="ECO:0007669"/>
    <property type="project" value="UniProtKB-SubCell"/>
</dbReference>
<dbReference type="GO" id="GO:0005829">
    <property type="term" value="C:cytosol"/>
    <property type="evidence" value="ECO:0000314"/>
    <property type="project" value="MGI"/>
</dbReference>
<dbReference type="GO" id="GO:0019898">
    <property type="term" value="C:extrinsic component of membrane"/>
    <property type="evidence" value="ECO:0000314"/>
    <property type="project" value="MGI"/>
</dbReference>
<dbReference type="GO" id="GO:0005794">
    <property type="term" value="C:Golgi apparatus"/>
    <property type="evidence" value="ECO:0000314"/>
    <property type="project" value="MGI"/>
</dbReference>
<dbReference type="GO" id="GO:0000139">
    <property type="term" value="C:Golgi membrane"/>
    <property type="evidence" value="ECO:0007669"/>
    <property type="project" value="UniProtKB-SubCell"/>
</dbReference>
<dbReference type="GO" id="GO:0005770">
    <property type="term" value="C:late endosome"/>
    <property type="evidence" value="ECO:0000314"/>
    <property type="project" value="MGI"/>
</dbReference>
<dbReference type="GO" id="GO:0045202">
    <property type="term" value="C:synapse"/>
    <property type="evidence" value="ECO:0000314"/>
    <property type="project" value="MGI"/>
</dbReference>
<dbReference type="GO" id="GO:0005802">
    <property type="term" value="C:trans-Golgi network"/>
    <property type="evidence" value="ECO:0000314"/>
    <property type="project" value="MGI"/>
</dbReference>
<dbReference type="GO" id="GO:0030133">
    <property type="term" value="C:transport vesicle"/>
    <property type="evidence" value="ECO:0000314"/>
    <property type="project" value="MGI"/>
</dbReference>
<dbReference type="GO" id="GO:0005524">
    <property type="term" value="F:ATP binding"/>
    <property type="evidence" value="ECO:0007669"/>
    <property type="project" value="UniProtKB-KW"/>
</dbReference>
<dbReference type="GO" id="GO:0000309">
    <property type="term" value="F:nicotinamide-nucleotide adenylyltransferase activity"/>
    <property type="evidence" value="ECO:0000315"/>
    <property type="project" value="MGI"/>
</dbReference>
<dbReference type="GO" id="GO:0004515">
    <property type="term" value="F:nicotinate-nucleotide adenylyltransferase activity"/>
    <property type="evidence" value="ECO:0000314"/>
    <property type="project" value="MGI"/>
</dbReference>
<dbReference type="GO" id="GO:0140768">
    <property type="term" value="F:protein ADP-ribosyltransferase-substrate adaptor activity"/>
    <property type="evidence" value="ECO:0000250"/>
    <property type="project" value="UniProtKB"/>
</dbReference>
<dbReference type="GO" id="GO:0034354">
    <property type="term" value="P:'de novo' NAD biosynthetic process from L-tryptophan"/>
    <property type="evidence" value="ECO:0000314"/>
    <property type="project" value="MGI"/>
</dbReference>
<dbReference type="GO" id="GO:0034355">
    <property type="term" value="P:NAD biosynthetic process via the salvage pathway"/>
    <property type="evidence" value="ECO:0000315"/>
    <property type="project" value="MGI"/>
</dbReference>
<dbReference type="GO" id="GO:0006741">
    <property type="term" value="P:NADP biosynthetic process"/>
    <property type="evidence" value="ECO:0000314"/>
    <property type="project" value="MGI"/>
</dbReference>
<dbReference type="GO" id="GO:2000766">
    <property type="term" value="P:negative regulation of cytoplasmic translation"/>
    <property type="evidence" value="ECO:0007669"/>
    <property type="project" value="Ensembl"/>
</dbReference>
<dbReference type="GO" id="GO:0006769">
    <property type="term" value="P:nicotinamide metabolic process"/>
    <property type="evidence" value="ECO:0000315"/>
    <property type="project" value="MGI"/>
</dbReference>
<dbReference type="CDD" id="cd09286">
    <property type="entry name" value="NMNAT_Eukarya"/>
    <property type="match status" value="1"/>
</dbReference>
<dbReference type="FunFam" id="3.40.50.620:FF:000080">
    <property type="entry name" value="Nicotinamide/nicotinic acid mononucleotide adenylyltransferase 2"/>
    <property type="match status" value="1"/>
</dbReference>
<dbReference type="Gene3D" id="3.40.50.620">
    <property type="entry name" value="HUPs"/>
    <property type="match status" value="1"/>
</dbReference>
<dbReference type="InterPro" id="IPR004821">
    <property type="entry name" value="Cyt_trans-like"/>
</dbReference>
<dbReference type="InterPro" id="IPR051182">
    <property type="entry name" value="Euk_NMN_adenylyltrnsfrase"/>
</dbReference>
<dbReference type="InterPro" id="IPR045094">
    <property type="entry name" value="NMNAT_euk"/>
</dbReference>
<dbReference type="InterPro" id="IPR014729">
    <property type="entry name" value="Rossmann-like_a/b/a_fold"/>
</dbReference>
<dbReference type="PANTHER" id="PTHR12039">
    <property type="entry name" value="NICOTINAMIDE MONONUCLEOTIDE ADENYLYLTRANSFERASE"/>
    <property type="match status" value="1"/>
</dbReference>
<dbReference type="PANTHER" id="PTHR12039:SF18">
    <property type="entry name" value="NICOTINAMIDE_NICOTINIC ACID MONONUCLEOTIDE ADENYLYLTRANSFERASE 2"/>
    <property type="match status" value="1"/>
</dbReference>
<dbReference type="Pfam" id="PF01467">
    <property type="entry name" value="CTP_transf_like"/>
    <property type="match status" value="1"/>
</dbReference>
<dbReference type="SUPFAM" id="SSF52374">
    <property type="entry name" value="Nucleotidylyl transferase"/>
    <property type="match status" value="1"/>
</dbReference>
<reference key="1">
    <citation type="journal article" date="2003" name="DNA Res.">
        <title>Prediction of the coding sequences of mouse homologues of KIAA gene: III. The complete nucleotide sequences of 500 mouse KIAA-homologous cDNAs identified by screening of terminal sequences of cDNA clones randomly sampled from size-fractionated libraries.</title>
        <authorList>
            <person name="Okazaki N."/>
            <person name="Kikuno R."/>
            <person name="Ohara R."/>
            <person name="Inamoto S."/>
            <person name="Koseki H."/>
            <person name="Hiraoka S."/>
            <person name="Saga Y."/>
            <person name="Nagase T."/>
            <person name="Ohara O."/>
            <person name="Koga H."/>
        </authorList>
    </citation>
    <scope>NUCLEOTIDE SEQUENCE [LARGE SCALE MRNA]</scope>
    <source>
        <tissue>Brain</tissue>
    </source>
</reference>
<reference key="2">
    <citation type="journal article" date="2005" name="Science">
        <title>The transcriptional landscape of the mammalian genome.</title>
        <authorList>
            <person name="Carninci P."/>
            <person name="Kasukawa T."/>
            <person name="Katayama S."/>
            <person name="Gough J."/>
            <person name="Frith M.C."/>
            <person name="Maeda N."/>
            <person name="Oyama R."/>
            <person name="Ravasi T."/>
            <person name="Lenhard B."/>
            <person name="Wells C."/>
            <person name="Kodzius R."/>
            <person name="Shimokawa K."/>
            <person name="Bajic V.B."/>
            <person name="Brenner S.E."/>
            <person name="Batalov S."/>
            <person name="Forrest A.R."/>
            <person name="Zavolan M."/>
            <person name="Davis M.J."/>
            <person name="Wilming L.G."/>
            <person name="Aidinis V."/>
            <person name="Allen J.E."/>
            <person name="Ambesi-Impiombato A."/>
            <person name="Apweiler R."/>
            <person name="Aturaliya R.N."/>
            <person name="Bailey T.L."/>
            <person name="Bansal M."/>
            <person name="Baxter L."/>
            <person name="Beisel K.W."/>
            <person name="Bersano T."/>
            <person name="Bono H."/>
            <person name="Chalk A.M."/>
            <person name="Chiu K.P."/>
            <person name="Choudhary V."/>
            <person name="Christoffels A."/>
            <person name="Clutterbuck D.R."/>
            <person name="Crowe M.L."/>
            <person name="Dalla E."/>
            <person name="Dalrymple B.P."/>
            <person name="de Bono B."/>
            <person name="Della Gatta G."/>
            <person name="di Bernardo D."/>
            <person name="Down T."/>
            <person name="Engstrom P."/>
            <person name="Fagiolini M."/>
            <person name="Faulkner G."/>
            <person name="Fletcher C.F."/>
            <person name="Fukushima T."/>
            <person name="Furuno M."/>
            <person name="Futaki S."/>
            <person name="Gariboldi M."/>
            <person name="Georgii-Hemming P."/>
            <person name="Gingeras T.R."/>
            <person name="Gojobori T."/>
            <person name="Green R.E."/>
            <person name="Gustincich S."/>
            <person name="Harbers M."/>
            <person name="Hayashi Y."/>
            <person name="Hensch T.K."/>
            <person name="Hirokawa N."/>
            <person name="Hill D."/>
            <person name="Huminiecki L."/>
            <person name="Iacono M."/>
            <person name="Ikeo K."/>
            <person name="Iwama A."/>
            <person name="Ishikawa T."/>
            <person name="Jakt M."/>
            <person name="Kanapin A."/>
            <person name="Katoh M."/>
            <person name="Kawasawa Y."/>
            <person name="Kelso J."/>
            <person name="Kitamura H."/>
            <person name="Kitano H."/>
            <person name="Kollias G."/>
            <person name="Krishnan S.P."/>
            <person name="Kruger A."/>
            <person name="Kummerfeld S.K."/>
            <person name="Kurochkin I.V."/>
            <person name="Lareau L.F."/>
            <person name="Lazarevic D."/>
            <person name="Lipovich L."/>
            <person name="Liu J."/>
            <person name="Liuni S."/>
            <person name="McWilliam S."/>
            <person name="Madan Babu M."/>
            <person name="Madera M."/>
            <person name="Marchionni L."/>
            <person name="Matsuda H."/>
            <person name="Matsuzawa S."/>
            <person name="Miki H."/>
            <person name="Mignone F."/>
            <person name="Miyake S."/>
            <person name="Morris K."/>
            <person name="Mottagui-Tabar S."/>
            <person name="Mulder N."/>
            <person name="Nakano N."/>
            <person name="Nakauchi H."/>
            <person name="Ng P."/>
            <person name="Nilsson R."/>
            <person name="Nishiguchi S."/>
            <person name="Nishikawa S."/>
            <person name="Nori F."/>
            <person name="Ohara O."/>
            <person name="Okazaki Y."/>
            <person name="Orlando V."/>
            <person name="Pang K.C."/>
            <person name="Pavan W.J."/>
            <person name="Pavesi G."/>
            <person name="Pesole G."/>
            <person name="Petrovsky N."/>
            <person name="Piazza S."/>
            <person name="Reed J."/>
            <person name="Reid J.F."/>
            <person name="Ring B.Z."/>
            <person name="Ringwald M."/>
            <person name="Rost B."/>
            <person name="Ruan Y."/>
            <person name="Salzberg S.L."/>
            <person name="Sandelin A."/>
            <person name="Schneider C."/>
            <person name="Schoenbach C."/>
            <person name="Sekiguchi K."/>
            <person name="Semple C.A."/>
            <person name="Seno S."/>
            <person name="Sessa L."/>
            <person name="Sheng Y."/>
            <person name="Shibata Y."/>
            <person name="Shimada H."/>
            <person name="Shimada K."/>
            <person name="Silva D."/>
            <person name="Sinclair B."/>
            <person name="Sperling S."/>
            <person name="Stupka E."/>
            <person name="Sugiura K."/>
            <person name="Sultana R."/>
            <person name="Takenaka Y."/>
            <person name="Taki K."/>
            <person name="Tammoja K."/>
            <person name="Tan S.L."/>
            <person name="Tang S."/>
            <person name="Taylor M.S."/>
            <person name="Tegner J."/>
            <person name="Teichmann S.A."/>
            <person name="Ueda H.R."/>
            <person name="van Nimwegen E."/>
            <person name="Verardo R."/>
            <person name="Wei C.L."/>
            <person name="Yagi K."/>
            <person name="Yamanishi H."/>
            <person name="Zabarovsky E."/>
            <person name="Zhu S."/>
            <person name="Zimmer A."/>
            <person name="Hide W."/>
            <person name="Bult C."/>
            <person name="Grimmond S.M."/>
            <person name="Teasdale R.D."/>
            <person name="Liu E.T."/>
            <person name="Brusic V."/>
            <person name="Quackenbush J."/>
            <person name="Wahlestedt C."/>
            <person name="Mattick J.S."/>
            <person name="Hume D.A."/>
            <person name="Kai C."/>
            <person name="Sasaki D."/>
            <person name="Tomaru Y."/>
            <person name="Fukuda S."/>
            <person name="Kanamori-Katayama M."/>
            <person name="Suzuki M."/>
            <person name="Aoki J."/>
            <person name="Arakawa T."/>
            <person name="Iida J."/>
            <person name="Imamura K."/>
            <person name="Itoh M."/>
            <person name="Kato T."/>
            <person name="Kawaji H."/>
            <person name="Kawagashira N."/>
            <person name="Kawashima T."/>
            <person name="Kojima M."/>
            <person name="Kondo S."/>
            <person name="Konno H."/>
            <person name="Nakano K."/>
            <person name="Ninomiya N."/>
            <person name="Nishio T."/>
            <person name="Okada M."/>
            <person name="Plessy C."/>
            <person name="Shibata K."/>
            <person name="Shiraki T."/>
            <person name="Suzuki S."/>
            <person name="Tagami M."/>
            <person name="Waki K."/>
            <person name="Watahiki A."/>
            <person name="Okamura-Oho Y."/>
            <person name="Suzuki H."/>
            <person name="Kawai J."/>
            <person name="Hayashizaki Y."/>
        </authorList>
    </citation>
    <scope>NUCLEOTIDE SEQUENCE [LARGE SCALE MRNA]</scope>
    <source>
        <strain>C57BL/6J</strain>
    </source>
</reference>
<reference key="3">
    <citation type="journal article" date="2010" name="PLoS Biol.">
        <title>Endogenous Nmnat2 is an essential survival factor for maintenance of healthy axons.</title>
        <authorList>
            <person name="Gilley J."/>
            <person name="Coleman M.P."/>
        </authorList>
    </citation>
    <scope>FUNCTION</scope>
    <scope>PROTEIN DEGRADATION</scope>
</reference>
<reference key="4">
    <citation type="journal article" date="2012" name="Curr. Biol.">
        <title>A novel Drosophila model of nerve injury reveals an essential role of Nmnat in maintaining axonal integrity.</title>
        <authorList>
            <person name="Fang Y."/>
            <person name="Soares L."/>
            <person name="Teng X."/>
            <person name="Geary M."/>
            <person name="Bonini N.M."/>
        </authorList>
    </citation>
    <scope>FUNCTION</scope>
</reference>
<reference key="5">
    <citation type="journal article" date="2012" name="PLoS ONE">
        <title>Nicotinamide mononucleotide adenylyltransferase 2 (Nmnat2) regulates axon integrity in the mouse embryo.</title>
        <authorList>
            <person name="Hicks A.N."/>
            <person name="Lorenzetti D."/>
            <person name="Gilley J."/>
            <person name="Lu B."/>
            <person name="Andersson K.E."/>
            <person name="Miligan C."/>
            <person name="Overbeek P.A."/>
            <person name="Oppenheim R."/>
            <person name="Bishop C.E."/>
        </authorList>
    </citation>
    <scope>FUNCTION</scope>
    <scope>DISRUPTION PHENOTYPE</scope>
</reference>
<reference key="6">
    <citation type="journal article" date="2013" name="Cell Rep.">
        <title>The Phr1 ubiquitin ligase promotes injury-induced axon self-destruction.</title>
        <authorList>
            <person name="Babetto E."/>
            <person name="Beirowski B."/>
            <person name="Russler E.V."/>
            <person name="Milbrandt J."/>
            <person name="DiAntonio A."/>
        </authorList>
    </citation>
    <scope>PROTEIN DEGRADATION</scope>
</reference>
<reference key="7">
    <citation type="journal article" date="2013" name="PLoS Biol.">
        <title>Subcellular localization determines the stability and axon protective capacity of axon survival factor Nmnat2.</title>
        <authorList>
            <person name="Milde S."/>
            <person name="Gilley J."/>
            <person name="Coleman M.P."/>
        </authorList>
    </citation>
    <scope>PROTEIN DEGRADATION</scope>
    <scope>UBIQUITINATION</scope>
    <scope>SUBCELLULAR LOCATION</scope>
    <scope>PALMITOYLATION AT CYS-164 AND CYS-165</scope>
    <scope>MUTAGENESIS OF LYS-151; LYS-155; ARG-162; 164-CYS-CYS-165; ARG-167 AND ARG-172</scope>
</reference>
<reference key="8">
    <citation type="journal article" date="2015" name="Cell Rep.">
        <title>Absence of SARM1 rescues development and survival of NMNAT2-deficient axons.</title>
        <authorList>
            <person name="Gilley J."/>
            <person name="Orsomando G."/>
            <person name="Nascimento-Ferreira I."/>
            <person name="Coleman M.P."/>
        </authorList>
    </citation>
    <scope>FUNCTION</scope>
    <scope>DISRUPTION PHENOTYPE</scope>
</reference>
<gene>
    <name evidence="12" type="primary">Nmnat2</name>
    <name evidence="9" type="synonym">Kiaa0479</name>
</gene>